<proteinExistence type="inferred from homology"/>
<sequence>MSTLVSLPTAAPAPDYQSIDRPLNFSNAAAAKVRELIQEEGNAELALRVYIQGGGCSGFQYGFEFDENRAEDDLAVATDGVTLLVDPLSLQYLMGAEVDYTESLTGAQFVIRNPNAKTTCGCGSSFSV</sequence>
<comment type="function">
    <text evidence="1">Required for insertion of 4Fe-4S clusters for at least IspG.</text>
</comment>
<comment type="cofactor">
    <cofactor evidence="1">
        <name>iron-sulfur cluster</name>
        <dbReference type="ChEBI" id="CHEBI:30408"/>
    </cofactor>
    <text evidence="1">Binds 1 iron-sulfur cluster per subunit.</text>
</comment>
<comment type="subunit">
    <text evidence="1">Homodimer.</text>
</comment>
<comment type="similarity">
    <text evidence="1">Belongs to the HesB/IscA family.</text>
</comment>
<organism>
    <name type="scientific">Xanthomonas campestris pv. campestris (strain ATCC 33913 / DSM 3586 / NCPPB 528 / LMG 568 / P 25)</name>
    <dbReference type="NCBI Taxonomy" id="190485"/>
    <lineage>
        <taxon>Bacteria</taxon>
        <taxon>Pseudomonadati</taxon>
        <taxon>Pseudomonadota</taxon>
        <taxon>Gammaproteobacteria</taxon>
        <taxon>Lysobacterales</taxon>
        <taxon>Lysobacteraceae</taxon>
        <taxon>Xanthomonas</taxon>
    </lineage>
</organism>
<gene>
    <name evidence="1" type="primary">erpA</name>
    <name type="ordered locus">XCC0488</name>
</gene>
<dbReference type="EMBL" id="AE008922">
    <property type="protein sequence ID" value="AAM39804.1"/>
    <property type="molecule type" value="Genomic_DNA"/>
</dbReference>
<dbReference type="RefSeq" id="NP_635880.1">
    <property type="nucleotide sequence ID" value="NC_003902.1"/>
</dbReference>
<dbReference type="RefSeq" id="WP_011035737.1">
    <property type="nucleotide sequence ID" value="NC_003902.1"/>
</dbReference>
<dbReference type="SMR" id="Q8PD57"/>
<dbReference type="STRING" id="190485.XCC0488"/>
<dbReference type="EnsemblBacteria" id="AAM39804">
    <property type="protein sequence ID" value="AAM39804"/>
    <property type="gene ID" value="XCC0488"/>
</dbReference>
<dbReference type="GeneID" id="58011800"/>
<dbReference type="KEGG" id="xcc:XCC0488"/>
<dbReference type="PATRIC" id="fig|190485.4.peg.534"/>
<dbReference type="eggNOG" id="COG0316">
    <property type="taxonomic scope" value="Bacteria"/>
</dbReference>
<dbReference type="HOGENOM" id="CLU_069054_5_3_6"/>
<dbReference type="OrthoDB" id="9801228at2"/>
<dbReference type="Proteomes" id="UP000001010">
    <property type="component" value="Chromosome"/>
</dbReference>
<dbReference type="GO" id="GO:0005829">
    <property type="term" value="C:cytosol"/>
    <property type="evidence" value="ECO:0000318"/>
    <property type="project" value="GO_Central"/>
</dbReference>
<dbReference type="GO" id="GO:0051537">
    <property type="term" value="F:2 iron, 2 sulfur cluster binding"/>
    <property type="evidence" value="ECO:0000318"/>
    <property type="project" value="GO_Central"/>
</dbReference>
<dbReference type="GO" id="GO:0051539">
    <property type="term" value="F:4 iron, 4 sulfur cluster binding"/>
    <property type="evidence" value="ECO:0000318"/>
    <property type="project" value="GO_Central"/>
</dbReference>
<dbReference type="GO" id="GO:0005506">
    <property type="term" value="F:iron ion binding"/>
    <property type="evidence" value="ECO:0000318"/>
    <property type="project" value="GO_Central"/>
</dbReference>
<dbReference type="GO" id="GO:0016226">
    <property type="term" value="P:iron-sulfur cluster assembly"/>
    <property type="evidence" value="ECO:0000318"/>
    <property type="project" value="GO_Central"/>
</dbReference>
<dbReference type="FunFam" id="2.60.300.12:FF:000002">
    <property type="entry name" value="Iron-sulfur cluster insertion protein ErpA"/>
    <property type="match status" value="1"/>
</dbReference>
<dbReference type="Gene3D" id="2.60.300.12">
    <property type="entry name" value="HesB-like domain"/>
    <property type="match status" value="1"/>
</dbReference>
<dbReference type="HAMAP" id="MF_01380">
    <property type="entry name" value="Fe_S_insert_ErpA"/>
    <property type="match status" value="1"/>
</dbReference>
<dbReference type="InterPro" id="IPR000361">
    <property type="entry name" value="FeS_biogenesis"/>
</dbReference>
<dbReference type="InterPro" id="IPR016092">
    <property type="entry name" value="FeS_cluster_insertion"/>
</dbReference>
<dbReference type="InterPro" id="IPR017870">
    <property type="entry name" value="FeS_cluster_insertion_CS"/>
</dbReference>
<dbReference type="InterPro" id="IPR023063">
    <property type="entry name" value="FeS_cluster_insertion_RrpA"/>
</dbReference>
<dbReference type="InterPro" id="IPR035903">
    <property type="entry name" value="HesB-like_dom_sf"/>
</dbReference>
<dbReference type="NCBIfam" id="TIGR00049">
    <property type="entry name" value="iron-sulfur cluster assembly accessory protein"/>
    <property type="match status" value="1"/>
</dbReference>
<dbReference type="NCBIfam" id="NF010147">
    <property type="entry name" value="PRK13623.1"/>
    <property type="match status" value="1"/>
</dbReference>
<dbReference type="PANTHER" id="PTHR43011">
    <property type="entry name" value="IRON-SULFUR CLUSTER ASSEMBLY 2 HOMOLOG, MITOCHONDRIAL"/>
    <property type="match status" value="1"/>
</dbReference>
<dbReference type="PANTHER" id="PTHR43011:SF1">
    <property type="entry name" value="IRON-SULFUR CLUSTER ASSEMBLY 2 HOMOLOG, MITOCHONDRIAL"/>
    <property type="match status" value="1"/>
</dbReference>
<dbReference type="Pfam" id="PF01521">
    <property type="entry name" value="Fe-S_biosyn"/>
    <property type="match status" value="1"/>
</dbReference>
<dbReference type="SUPFAM" id="SSF89360">
    <property type="entry name" value="HesB-like domain"/>
    <property type="match status" value="1"/>
</dbReference>
<dbReference type="PROSITE" id="PS01152">
    <property type="entry name" value="HESB"/>
    <property type="match status" value="1"/>
</dbReference>
<accession>Q8PD57</accession>
<name>ERPA_XANCP</name>
<protein>
    <recommendedName>
        <fullName evidence="1">Iron-sulfur cluster insertion protein ErpA</fullName>
    </recommendedName>
</protein>
<reference key="1">
    <citation type="journal article" date="2002" name="Nature">
        <title>Comparison of the genomes of two Xanthomonas pathogens with differing host specificities.</title>
        <authorList>
            <person name="da Silva A.C.R."/>
            <person name="Ferro J.A."/>
            <person name="Reinach F.C."/>
            <person name="Farah C.S."/>
            <person name="Furlan L.R."/>
            <person name="Quaggio R.B."/>
            <person name="Monteiro-Vitorello C.B."/>
            <person name="Van Sluys M.A."/>
            <person name="Almeida N.F. Jr."/>
            <person name="Alves L.M.C."/>
            <person name="do Amaral A.M."/>
            <person name="Bertolini M.C."/>
            <person name="Camargo L.E.A."/>
            <person name="Camarotte G."/>
            <person name="Cannavan F."/>
            <person name="Cardozo J."/>
            <person name="Chambergo F."/>
            <person name="Ciapina L.P."/>
            <person name="Cicarelli R.M.B."/>
            <person name="Coutinho L.L."/>
            <person name="Cursino-Santos J.R."/>
            <person name="El-Dorry H."/>
            <person name="Faria J.B."/>
            <person name="Ferreira A.J.S."/>
            <person name="Ferreira R.C.C."/>
            <person name="Ferro M.I.T."/>
            <person name="Formighieri E.F."/>
            <person name="Franco M.C."/>
            <person name="Greggio C.C."/>
            <person name="Gruber A."/>
            <person name="Katsuyama A.M."/>
            <person name="Kishi L.T."/>
            <person name="Leite R.P."/>
            <person name="Lemos E.G.M."/>
            <person name="Lemos M.V.F."/>
            <person name="Locali E.C."/>
            <person name="Machado M.A."/>
            <person name="Madeira A.M.B.N."/>
            <person name="Martinez-Rossi N.M."/>
            <person name="Martins E.C."/>
            <person name="Meidanis J."/>
            <person name="Menck C.F.M."/>
            <person name="Miyaki C.Y."/>
            <person name="Moon D.H."/>
            <person name="Moreira L.M."/>
            <person name="Novo M.T.M."/>
            <person name="Okura V.K."/>
            <person name="Oliveira M.C."/>
            <person name="Oliveira V.R."/>
            <person name="Pereira H.A."/>
            <person name="Rossi A."/>
            <person name="Sena J.A.D."/>
            <person name="Silva C."/>
            <person name="de Souza R.F."/>
            <person name="Spinola L.A.F."/>
            <person name="Takita M.A."/>
            <person name="Tamura R.E."/>
            <person name="Teixeira E.C."/>
            <person name="Tezza R.I.D."/>
            <person name="Trindade dos Santos M."/>
            <person name="Truffi D."/>
            <person name="Tsai S.M."/>
            <person name="White F.F."/>
            <person name="Setubal J.C."/>
            <person name="Kitajima J.P."/>
        </authorList>
    </citation>
    <scope>NUCLEOTIDE SEQUENCE [LARGE SCALE GENOMIC DNA]</scope>
    <source>
        <strain>ATCC 33913 / DSM 3586 / NCPPB 528 / LMG 568 / P 25</strain>
    </source>
</reference>
<keyword id="KW-0408">Iron</keyword>
<keyword id="KW-0411">Iron-sulfur</keyword>
<keyword id="KW-0479">Metal-binding</keyword>
<keyword id="KW-1185">Reference proteome</keyword>
<feature type="chain" id="PRO_0000311576" description="Iron-sulfur cluster insertion protein ErpA">
    <location>
        <begin position="1"/>
        <end position="128"/>
    </location>
</feature>
<feature type="binding site" evidence="1">
    <location>
        <position position="56"/>
    </location>
    <ligand>
        <name>iron-sulfur cluster</name>
        <dbReference type="ChEBI" id="CHEBI:30408"/>
    </ligand>
</feature>
<feature type="binding site" evidence="1">
    <location>
        <position position="120"/>
    </location>
    <ligand>
        <name>iron-sulfur cluster</name>
        <dbReference type="ChEBI" id="CHEBI:30408"/>
    </ligand>
</feature>
<feature type="binding site" evidence="1">
    <location>
        <position position="122"/>
    </location>
    <ligand>
        <name>iron-sulfur cluster</name>
        <dbReference type="ChEBI" id="CHEBI:30408"/>
    </ligand>
</feature>
<evidence type="ECO:0000255" key="1">
    <source>
        <dbReference type="HAMAP-Rule" id="MF_01380"/>
    </source>
</evidence>